<sequence>MLGLVLLYVGIVLISNGICGLTKVDPKSTAVMNFFVGGLSIICNIVVITYSALHPTAPVEGAEDIAQVSHHLTSFYGPATGLLFGFTYLYAAINHTFGLDWRPYSWYSLFVAINTIPAAILSHYSDMLDDHKVLGITEGDWWAIIWLAWGVLWLTAFIENILKIPLGKFTPWLAIIEGILTAWIPAWLLFIQHWV</sequence>
<proteinExistence type="evidence at protein level"/>
<reference key="1">
    <citation type="journal article" date="1992" name="J. Bacteriol.">
        <title>Expression of Helicobacter pylori urease genes in Escherichia coli grown under nitrogen-limiting conditions.</title>
        <authorList>
            <person name="Cussac V."/>
            <person name="Ferrero R.L."/>
            <person name="Labigne A."/>
        </authorList>
    </citation>
    <scope>NUCLEOTIDE SEQUENCE [GENOMIC DNA]</scope>
    <source>
        <strain>85P</strain>
    </source>
</reference>
<reference key="2">
    <citation type="journal article" date="2000" name="Mol. Microbiol.">
        <title>Identification of the urease operon in Helicobacter pylori and its control by mRNA decay in response to pH.</title>
        <authorList>
            <person name="Akada J.K."/>
            <person name="Shirai M."/>
            <person name="Takeuchi H."/>
            <person name="Tsuda M."/>
            <person name="Nakazawa T."/>
        </authorList>
    </citation>
    <scope>NUCLEOTIDE SEQUENCE [GENOMIC DNA]</scope>
    <source>
        <strain>HPK5</strain>
    </source>
</reference>
<reference key="3">
    <citation type="journal article" date="2001" name="Proc. Natl. Acad. Sci. U.S.A.">
        <title>Recombination and mutation during long-term gastric colonization by Helicobacter pylori: estimates of clock rates, recombination size and minimal age.</title>
        <authorList>
            <person name="Falush D."/>
            <person name="Kraft C."/>
            <person name="Taylor N.S."/>
            <person name="Correa P."/>
            <person name="Fox J.G."/>
            <person name="Achtman M."/>
            <person name="Suerbaum S."/>
        </authorList>
    </citation>
    <scope>NUCLEOTIDE SEQUENCE [GENOMIC DNA]</scope>
    <source>
        <strain>LSU1037-1</strain>
        <strain>LSU1037-5</strain>
        <strain>LSU1062-1</strain>
        <strain>LSU1062-3</strain>
        <strain>LSU2003-1</strain>
        <strain>LSU2003-7</strain>
        <strain>NQ1712</strain>
    </source>
</reference>
<reference key="4">
    <citation type="journal article" date="1997" name="Nature">
        <title>The complete genome sequence of the gastric pathogen Helicobacter pylori.</title>
        <authorList>
            <person name="Tomb J.-F."/>
            <person name="White O."/>
            <person name="Kerlavage A.R."/>
            <person name="Clayton R.A."/>
            <person name="Sutton G.G."/>
            <person name="Fleischmann R.D."/>
            <person name="Ketchum K.A."/>
            <person name="Klenk H.-P."/>
            <person name="Gill S.R."/>
            <person name="Dougherty B.A."/>
            <person name="Nelson K.E."/>
            <person name="Quackenbush J."/>
            <person name="Zhou L."/>
            <person name="Kirkness E.F."/>
            <person name="Peterson S.N."/>
            <person name="Loftus B.J."/>
            <person name="Richardson D.L."/>
            <person name="Dodson R.J."/>
            <person name="Khalak H.G."/>
            <person name="Glodek A."/>
            <person name="McKenney K."/>
            <person name="FitzGerald L.M."/>
            <person name="Lee N."/>
            <person name="Adams M.D."/>
            <person name="Hickey E.K."/>
            <person name="Berg D.E."/>
            <person name="Gocayne J.D."/>
            <person name="Utterback T.R."/>
            <person name="Peterson J.D."/>
            <person name="Kelley J.M."/>
            <person name="Cotton M.D."/>
            <person name="Weidman J.F."/>
            <person name="Fujii C."/>
            <person name="Bowman C."/>
            <person name="Watthey L."/>
            <person name="Wallin E."/>
            <person name="Hayes W.S."/>
            <person name="Borodovsky M."/>
            <person name="Karp P.D."/>
            <person name="Smith H.O."/>
            <person name="Fraser C.M."/>
            <person name="Venter J.C."/>
        </authorList>
    </citation>
    <scope>NUCLEOTIDE SEQUENCE [LARGE SCALE GENOMIC DNA]</scope>
    <source>
        <strain>ATCC 700392 / 26695</strain>
    </source>
</reference>
<reference key="5">
    <citation type="journal article" date="1998" name="Infect. Immun.">
        <title>The Helicobacter pylori UreI protein is not involved in urease activity but is essential for bacterial survival in vivo.</title>
        <authorList>
            <person name="Skouloubris S."/>
            <person name="Thiberge J.-M."/>
            <person name="Labigne A."/>
            <person name="De Reuse H."/>
        </authorList>
    </citation>
    <scope>FUNCTION</scope>
    <scope>ROLE IN VIRULENCE</scope>
</reference>
<reference key="6">
    <citation type="journal article" date="2000" name="Science">
        <title>A H+-gated urea channel: the link between Helicobacter pylori urease and gastric colonization.</title>
        <authorList>
            <person name="Weeks D.L."/>
            <person name="Eskandari S."/>
            <person name="Scott D.R."/>
            <person name="Sachs G."/>
        </authorList>
    </citation>
    <scope>CHARACTERIZATION</scope>
    <scope>TOPOLOGY</scope>
    <scope>MUTAGENESIS OF HIS-123</scope>
</reference>
<reference key="7">
    <citation type="journal article" date="2001" name="Mol. Microbiol.">
        <title>Sites of pH regulation of the urea channel of Helicobacter pylori.</title>
        <authorList>
            <person name="Weeks D.L."/>
            <person name="Sachs G."/>
        </authorList>
    </citation>
    <scope>FUNCTION</scope>
    <scope>MUTAGENESIS</scope>
</reference>
<reference key="8">
    <citation type="journal article" date="2001" name="Mol. Microbiol.">
        <title>The Helicobacter pylori UreI protein: role in adaptation to acidity and identification of residues essential for its activity and for acid activation.</title>
        <authorList>
            <person name="Bury-Mone S."/>
            <person name="Skouloubris S."/>
            <person name="Labigne A."/>
            <person name="De Reuse H."/>
        </authorList>
    </citation>
    <scope>FUNCTION</scope>
    <scope>MUTAGENESIS OF HIS-71; HIS-123; HIS-131 AND HIS-193</scope>
</reference>
<reference key="9">
    <citation type="journal article" date="2003" name="Am. J. Physiol.">
        <title>Interactions among the seven Helicobacter pylori proteins encoded by the urease gene cluster.</title>
        <authorList>
            <person name="Voland P."/>
            <person name="Weeks D.L."/>
            <person name="Marcus E.A."/>
            <person name="Prinz C."/>
            <person name="Sachs G."/>
            <person name="Scott D."/>
        </authorList>
    </citation>
    <scope>INTERACTION WITH UREASE</scope>
</reference>
<name>UREI_HELPY</name>
<gene>
    <name type="primary">ureI</name>
    <name type="ordered locus">HP_0071</name>
</gene>
<protein>
    <recommendedName>
        <fullName>Acid-activated urea channel</fullName>
    </recommendedName>
    <alternativeName>
        <fullName>Urease accessory protein UreI</fullName>
    </alternativeName>
</protein>
<accession>Q09068</accession>
<accession>Q8VN83</accession>
<accession>Q8VN86</accession>
<accession>Q8VN88</accession>
<accession>Q8VN89</accession>
<accession>Q9S0Q4</accession>
<evidence type="ECO:0000255" key="1"/>
<evidence type="ECO:0000269" key="2">
    <source>
    </source>
</evidence>
<evidence type="ECO:0000269" key="3">
    <source>
    </source>
</evidence>
<evidence type="ECO:0000269" key="4">
    <source>
    </source>
</evidence>
<evidence type="ECO:0000269" key="5">
    <source>
    </source>
</evidence>
<evidence type="ECO:0000305" key="6"/>
<evidence type="ECO:0000305" key="7">
    <source>
    </source>
</evidence>
<evidence type="ECO:0000305" key="8">
    <source>
    </source>
</evidence>
<evidence type="ECO:0000305" key="9">
    <source>
    </source>
</evidence>
<evidence type="ECO:0000305" key="10">
    <source>
    </source>
</evidence>
<feature type="chain" id="PRO_0000067680" description="Acid-activated urea channel">
    <location>
        <begin position="1"/>
        <end position="195"/>
    </location>
</feature>
<feature type="topological domain" description="Periplasmic" evidence="7">
    <location>
        <position position="1"/>
    </location>
</feature>
<feature type="transmembrane region" description="Helical" evidence="1">
    <location>
        <begin position="2"/>
        <end position="21"/>
    </location>
</feature>
<feature type="topological domain" description="Cytoplasmic" evidence="7">
    <location>
        <begin position="22"/>
        <end position="33"/>
    </location>
</feature>
<feature type="transmembrane region" description="Helical" evidence="1">
    <location>
        <begin position="34"/>
        <end position="53"/>
    </location>
</feature>
<feature type="topological domain" description="Periplasmic" evidence="7">
    <location>
        <begin position="54"/>
        <end position="74"/>
    </location>
</feature>
<feature type="transmembrane region" description="Helical" evidence="1">
    <location>
        <begin position="75"/>
        <end position="93"/>
    </location>
</feature>
<feature type="topological domain" description="Cytoplasmic" evidence="7">
    <location>
        <begin position="94"/>
        <end position="103"/>
    </location>
</feature>
<feature type="transmembrane region" description="Helical" evidence="1">
    <location>
        <begin position="104"/>
        <end position="122"/>
    </location>
</feature>
<feature type="topological domain" description="Periplasmic" evidence="7">
    <location>
        <begin position="123"/>
        <end position="140"/>
    </location>
</feature>
<feature type="transmembrane region" description="Helical" evidence="1">
    <location>
        <begin position="141"/>
        <end position="158"/>
    </location>
</feature>
<feature type="topological domain" description="Cytoplasmic" evidence="7">
    <location>
        <begin position="159"/>
        <end position="171"/>
    </location>
</feature>
<feature type="transmembrane region" description="Helical" evidence="1">
    <location>
        <begin position="172"/>
        <end position="191"/>
    </location>
</feature>
<feature type="topological domain" description="Periplasmic" evidence="7">
    <location>
        <begin position="192"/>
        <end position="195"/>
    </location>
</feature>
<feature type="sequence variant" description="In strain: LSU1037-1, LSU1037-5, LSU1062-1, LSU1062-3, LSU2003-1 and LSU2003-7.">
    <original>I</original>
    <variation>V</variation>
    <location>
        <position position="42"/>
    </location>
</feature>
<feature type="sequence variant" description="In strain: 85P, HPK5, LSU1037-1, LSU1037-5, LSU1062-1, LSU1062-3, LSU2003-1 and LSU2003-7.">
    <original>I</original>
    <variation>V</variation>
    <location>
        <position position="45"/>
    </location>
</feature>
<feature type="sequence variant" description="In strain: LSU2003-1 and LSU2003-7.">
    <original>V</original>
    <variation>A</variation>
    <location>
        <position position="47"/>
    </location>
</feature>
<feature type="sequence variant" description="In strain: LSU2003-1 and LSU2003-7.">
    <original>S</original>
    <variation>F</variation>
    <location>
        <position position="51"/>
    </location>
</feature>
<feature type="sequence variant" description="In strain: LSU2003-7.">
    <original>L</original>
    <variation>V</variation>
    <location>
        <position position="53"/>
    </location>
</feature>
<feature type="sequence variant" description="In strain: 85P, HPK5 and NQ1712.">
    <original>H</original>
    <variation>N</variation>
    <location>
        <position position="54"/>
    </location>
</feature>
<feature type="sequence variant" description="In strain: LSU1037-1, LSU1037-5, LSU1062-1, LSU1062-3, LSU2003-1, LSU2003-7 and NQ1712.">
    <original>A</original>
    <variation>V</variation>
    <location>
        <position position="66"/>
    </location>
</feature>
<feature type="sequence variant" description="In strain: 85P and HPK5.">
    <original>S</original>
    <variation>N</variation>
    <location>
        <position position="74"/>
    </location>
</feature>
<feature type="sequence variant" description="In strain: HPK5.">
    <original>G</original>
    <variation>E</variation>
    <location>
        <position position="77"/>
    </location>
</feature>
<feature type="sequence variant" description="In strain: HPK5.">
    <original>N</original>
    <variation>S</variation>
    <location>
        <position position="94"/>
    </location>
</feature>
<feature type="sequence variant" description="In strain: HPK5.">
    <original>G</original>
    <variation>N</variation>
    <location>
        <position position="98"/>
    </location>
</feature>
<feature type="sequence variant" description="In strain: LSU1037-1, LSU1037-5, LSU1062-1, LSU1062-3, LSU2003-1 and LSU2003-7.">
    <original>I</original>
    <variation>V</variation>
    <location>
        <position position="116"/>
    </location>
</feature>
<feature type="sequence variant" description="In strain: LSU1037-1.">
    <original>P</original>
    <variation>L</variation>
    <location>
        <position position="171"/>
    </location>
</feature>
<feature type="mutagenesis site" description="No loss of acid activation of urea uptake." evidence="4">
    <original>H</original>
    <variation>G</variation>
    <location>
        <position position="71"/>
    </location>
</feature>
<feature type="mutagenesis site" description="No loss of acid activation of urea uptake; when expressed in H.pylori itself. Opposite result; when expressed in the Xenopus oocytes model." evidence="2 4">
    <original>H</original>
    <variation>R</variation>
    <variation>G</variation>
    <location>
        <position position="123"/>
    </location>
</feature>
<feature type="mutagenesis site" description="No loss of acid activation of urea uptake." evidence="4">
    <original>H</original>
    <variation>G</variation>
    <location>
        <position position="131"/>
    </location>
</feature>
<feature type="mutagenesis site" description="Loss of acid activation of urea uptake." evidence="4">
    <original>H</original>
    <variation>G</variation>
    <location>
        <position position="193"/>
    </location>
</feature>
<organism>
    <name type="scientific">Helicobacter pylori (strain ATCC 700392 / 26695)</name>
    <name type="common">Campylobacter pylori</name>
    <dbReference type="NCBI Taxonomy" id="85962"/>
    <lineage>
        <taxon>Bacteria</taxon>
        <taxon>Pseudomonadati</taxon>
        <taxon>Campylobacterota</taxon>
        <taxon>Epsilonproteobacteria</taxon>
        <taxon>Campylobacterales</taxon>
        <taxon>Helicobacteraceae</taxon>
        <taxon>Helicobacter</taxon>
    </lineage>
</organism>
<comment type="function">
    <text evidence="3 4 5">Functions as a specific, H(+)-activated urea channel that increases the rate of urea entry into the cytoplasm, resulting in activation of cytoplasmic urease at acidic medium pH. Is essential for H.pylori gastric survival and colonization. Is necessary for the adaptation of urease activity to the extracellular pH, as in the presence of urea, UreI rapidly enhances the production of ammonia in the extracellular medium when the pH of the medium was decreased to pH5 or below.</text>
</comment>
<comment type="subunit">
    <text>Forms a membrane complex with the urease UreA/UreB.</text>
</comment>
<comment type="interaction">
    <interactant intactId="EBI-7667832">
        <id>Q09068</id>
    </interactant>
    <interactant intactId="EBI-7494226">
        <id>O34810</id>
        <label>HP_1409</label>
    </interactant>
    <organismsDiffer>false</organismsDiffer>
    <experiments>3</experiments>
</comment>
<comment type="interaction">
    <interactant intactId="EBI-7667832">
        <id>Q09068</id>
    </interactant>
    <interactant intactId="EBI-7498734">
        <id>O26033</id>
        <label>HP_1503</label>
    </interactant>
    <organismsDiffer>false</organismsDiffer>
    <experiments>3</experiments>
</comment>
<comment type="subcellular location">
    <subcellularLocation>
        <location>Cell inner membrane</location>
        <topology>Multi-pass membrane protein</topology>
    </subcellularLocation>
</comment>
<comment type="miscellaneous">
    <text>UreI-mediated transport is urea-specific, passive, non-saturable, non-electrogenic, and temperature independent.</text>
</comment>
<comment type="similarity">
    <text evidence="6">Belongs to the AmiS/UreI family.</text>
</comment>
<comment type="caution">
    <text evidence="9 10">Was originally (PubMed:1313413) thought to be an accessory protein required for nickel incorporation at the urease active site or for nickel transport. Actually, has been shown (PubMed:9712811) not to be required for the assembly of a catalytically active urease.</text>
</comment>
<comment type="caution">
    <text evidence="8">In PubMed:11442825, mutational analysis indicated that His-123, His-131, and His-193 were important for acid activation of urea uptake in the Xenopus oocytes model, but in H.pylori itself His-193 seems to be the only histidine that is crucial for UreI activation at low pH.</text>
</comment>
<dbReference type="EMBL" id="M84338">
    <property type="protein sequence ID" value="AAA25022.1"/>
    <property type="molecule type" value="Genomic_DNA"/>
</dbReference>
<dbReference type="EMBL" id="AB032429">
    <property type="protein sequence ID" value="BAA84534.1"/>
    <property type="molecule type" value="Genomic_DNA"/>
</dbReference>
<dbReference type="EMBL" id="AJ418323">
    <property type="protein sequence ID" value="CAD11209.1"/>
    <property type="molecule type" value="Genomic_DNA"/>
</dbReference>
<dbReference type="EMBL" id="AJ418324">
    <property type="protein sequence ID" value="CAD11212.1"/>
    <property type="molecule type" value="Genomic_DNA"/>
</dbReference>
<dbReference type="EMBL" id="AJ418325">
    <property type="protein sequence ID" value="CAD11215.1"/>
    <property type="molecule type" value="Genomic_DNA"/>
</dbReference>
<dbReference type="EMBL" id="AJ418326">
    <property type="protein sequence ID" value="CAD11218.1"/>
    <property type="molecule type" value="Genomic_DNA"/>
</dbReference>
<dbReference type="EMBL" id="AJ418327">
    <property type="protein sequence ID" value="CAD11221.1"/>
    <property type="molecule type" value="Genomic_DNA"/>
</dbReference>
<dbReference type="EMBL" id="AJ418328">
    <property type="protein sequence ID" value="CAD11224.1"/>
    <property type="molecule type" value="Genomic_DNA"/>
</dbReference>
<dbReference type="EMBL" id="AJ418331">
    <property type="protein sequence ID" value="CAD11233.1"/>
    <property type="molecule type" value="Genomic_DNA"/>
</dbReference>
<dbReference type="EMBL" id="AE000511">
    <property type="protein sequence ID" value="AAD07134.1"/>
    <property type="molecule type" value="Genomic_DNA"/>
</dbReference>
<dbReference type="PIR" id="G64528">
    <property type="entry name" value="A41834"/>
</dbReference>
<dbReference type="RefSeq" id="NP_206871.1">
    <property type="nucleotide sequence ID" value="NC_000915.1"/>
</dbReference>
<dbReference type="RefSeq" id="WP_000901247.1">
    <property type="nucleotide sequence ID" value="NC_018939.1"/>
</dbReference>
<dbReference type="SMR" id="Q09068"/>
<dbReference type="DIP" id="DIP-3136N"/>
<dbReference type="IntAct" id="Q09068">
    <property type="interactions" value="15"/>
</dbReference>
<dbReference type="MINT" id="Q09068"/>
<dbReference type="STRING" id="85962.HP_0071"/>
<dbReference type="TCDB" id="1.A.29.1.3">
    <property type="family name" value="the urea/amide channel (uac) family"/>
</dbReference>
<dbReference type="PaxDb" id="85962-C694_00340"/>
<dbReference type="EnsemblBacteria" id="AAD07134">
    <property type="protein sequence ID" value="AAD07134"/>
    <property type="gene ID" value="HP_0071"/>
</dbReference>
<dbReference type="KEGG" id="heo:C694_00340"/>
<dbReference type="KEGG" id="hpy:HP_0071"/>
<dbReference type="PATRIC" id="fig|85962.47.peg.74"/>
<dbReference type="eggNOG" id="ENOG50300RH">
    <property type="taxonomic scope" value="Bacteria"/>
</dbReference>
<dbReference type="InParanoid" id="Q09068"/>
<dbReference type="OrthoDB" id="6636366at2"/>
<dbReference type="Proteomes" id="UP000000429">
    <property type="component" value="Chromosome"/>
</dbReference>
<dbReference type="GO" id="GO:0005886">
    <property type="term" value="C:plasma membrane"/>
    <property type="evidence" value="ECO:0007669"/>
    <property type="project" value="UniProtKB-SubCell"/>
</dbReference>
<dbReference type="CDD" id="cd13404">
    <property type="entry name" value="UreI_AmiS_like"/>
    <property type="match status" value="1"/>
</dbReference>
<dbReference type="Gene3D" id="1.25.40.600">
    <property type="match status" value="1"/>
</dbReference>
<dbReference type="InterPro" id="IPR003211">
    <property type="entry name" value="AmiSUreI_transpt"/>
</dbReference>
<dbReference type="InterPro" id="IPR038523">
    <property type="entry name" value="AmiSUreI_transpt_sf"/>
</dbReference>
<dbReference type="Pfam" id="PF02293">
    <property type="entry name" value="AmiS_UreI"/>
    <property type="match status" value="1"/>
</dbReference>
<keyword id="KW-0997">Cell inner membrane</keyword>
<keyword id="KW-1003">Cell membrane</keyword>
<keyword id="KW-0472">Membrane</keyword>
<keyword id="KW-1185">Reference proteome</keyword>
<keyword id="KW-0812">Transmembrane</keyword>
<keyword id="KW-1133">Transmembrane helix</keyword>
<keyword id="KW-0813">Transport</keyword>
<keyword id="KW-0843">Virulence</keyword>